<protein>
    <recommendedName>
        <fullName evidence="1">tRNA dimethylallyltransferase</fullName>
        <ecNumber evidence="1">2.5.1.75</ecNumber>
    </recommendedName>
    <alternativeName>
        <fullName evidence="1">Dimethylallyl diphosphate:tRNA dimethylallyltransferase</fullName>
        <shortName evidence="1">DMAPP:tRNA dimethylallyltransferase</shortName>
        <shortName evidence="1">DMATase</shortName>
    </alternativeName>
    <alternativeName>
        <fullName evidence="1">Isopentenyl-diphosphate:tRNA isopentenyltransferase</fullName>
        <shortName evidence="1">IPP transferase</shortName>
        <shortName evidence="1">IPPT</shortName>
        <shortName evidence="1">IPTase</shortName>
    </alternativeName>
</protein>
<dbReference type="EC" id="2.5.1.75" evidence="1"/>
<dbReference type="EMBL" id="AF016312">
    <property type="protein sequence ID" value="AAB69443.1"/>
    <property type="molecule type" value="Genomic_DNA"/>
</dbReference>
<dbReference type="SMR" id="O30762"/>
<dbReference type="eggNOG" id="COG0324">
    <property type="taxonomic scope" value="Bacteria"/>
</dbReference>
<dbReference type="GO" id="GO:0005524">
    <property type="term" value="F:ATP binding"/>
    <property type="evidence" value="ECO:0007669"/>
    <property type="project" value="UniProtKB-UniRule"/>
</dbReference>
<dbReference type="GO" id="GO:0052381">
    <property type="term" value="F:tRNA dimethylallyltransferase activity"/>
    <property type="evidence" value="ECO:0007669"/>
    <property type="project" value="UniProtKB-UniRule"/>
</dbReference>
<dbReference type="GO" id="GO:0006400">
    <property type="term" value="P:tRNA modification"/>
    <property type="evidence" value="ECO:0007669"/>
    <property type="project" value="TreeGrafter"/>
</dbReference>
<dbReference type="FunFam" id="1.10.20.140:FF:000001">
    <property type="entry name" value="tRNA dimethylallyltransferase"/>
    <property type="match status" value="1"/>
</dbReference>
<dbReference type="Gene3D" id="1.10.20.140">
    <property type="match status" value="1"/>
</dbReference>
<dbReference type="Gene3D" id="3.40.50.300">
    <property type="entry name" value="P-loop containing nucleotide triphosphate hydrolases"/>
    <property type="match status" value="1"/>
</dbReference>
<dbReference type="HAMAP" id="MF_00185">
    <property type="entry name" value="IPP_trans"/>
    <property type="match status" value="1"/>
</dbReference>
<dbReference type="InterPro" id="IPR039657">
    <property type="entry name" value="Dimethylallyltransferase"/>
</dbReference>
<dbReference type="InterPro" id="IPR018022">
    <property type="entry name" value="IPT"/>
</dbReference>
<dbReference type="InterPro" id="IPR027417">
    <property type="entry name" value="P-loop_NTPase"/>
</dbReference>
<dbReference type="NCBIfam" id="TIGR00174">
    <property type="entry name" value="miaA"/>
    <property type="match status" value="1"/>
</dbReference>
<dbReference type="PANTHER" id="PTHR11088">
    <property type="entry name" value="TRNA DIMETHYLALLYLTRANSFERASE"/>
    <property type="match status" value="1"/>
</dbReference>
<dbReference type="PANTHER" id="PTHR11088:SF60">
    <property type="entry name" value="TRNA DIMETHYLALLYLTRANSFERASE"/>
    <property type="match status" value="1"/>
</dbReference>
<dbReference type="Pfam" id="PF01715">
    <property type="entry name" value="IPPT"/>
    <property type="match status" value="1"/>
</dbReference>
<dbReference type="SUPFAM" id="SSF52540">
    <property type="entry name" value="P-loop containing nucleoside triphosphate hydrolases"/>
    <property type="match status" value="1"/>
</dbReference>
<keyword id="KW-0067">ATP-binding</keyword>
<keyword id="KW-0460">Magnesium</keyword>
<keyword id="KW-0547">Nucleotide-binding</keyword>
<keyword id="KW-0808">Transferase</keyword>
<keyword id="KW-0819">tRNA processing</keyword>
<proteinExistence type="inferred from homology"/>
<organism>
    <name type="scientific">Pseudomonas putida</name>
    <name type="common">Arthrobacter siderocapsulatus</name>
    <dbReference type="NCBI Taxonomy" id="303"/>
    <lineage>
        <taxon>Bacteria</taxon>
        <taxon>Pseudomonadati</taxon>
        <taxon>Pseudomonadota</taxon>
        <taxon>Gammaproteobacteria</taxon>
        <taxon>Pseudomonadales</taxon>
        <taxon>Pseudomonadaceae</taxon>
        <taxon>Pseudomonas</taxon>
    </lineage>
</organism>
<accession>O30762</accession>
<name>MIAA_PSEPU</name>
<sequence length="322" mass="35489">MSGKPPAIFLMGPTAAGKTDLAIELTKVLPCELISVDSALVYRGMDIGSAKPSKEILAAHPHRLIDIRDPAESYSAAQFRADALEAMAEITARGKIPLLVGGTMLYYKALIDGLADMPADAAVRAELERQAEALGLAELHRQLAEVDPESAARIHPNDPQRLIRALEVYRVSGESMTAHRQRQFAESRGADAGAGGHLPYTVASLAIAPTDRHILHQRIALRFSQMLEQGFVDEVRSLRARSDLHAGLPSIRAVGYRQVWDYLDGKLTENEMRERGIIATRQLAKRQFTWLRGWPEVHWLDSLACDNLSRTLKYLGAISILS</sequence>
<reference key="1">
    <citation type="submission" date="1997-07" db="EMBL/GenBank/DDBJ databases">
        <title>Attenuation of the Pseudomonas putida trpE and trpGDC genes.</title>
        <authorList>
            <person name="Olekhnovich I.N."/>
            <person name="Gussin G.N."/>
        </authorList>
    </citation>
    <scope>NUCLEOTIDE SEQUENCE [GENOMIC DNA]</scope>
    <source>
        <strain>M</strain>
    </source>
</reference>
<feature type="chain" id="PRO_0000163957" description="tRNA dimethylallyltransferase">
    <location>
        <begin position="1"/>
        <end position="322"/>
    </location>
</feature>
<feature type="region of interest" description="Interaction with substrate tRNA" evidence="1">
    <location>
        <begin position="37"/>
        <end position="40"/>
    </location>
</feature>
<feature type="region of interest" description="Interaction with substrate tRNA" evidence="1">
    <location>
        <begin position="160"/>
        <end position="164"/>
    </location>
</feature>
<feature type="binding site" evidence="1">
    <location>
        <begin position="12"/>
        <end position="19"/>
    </location>
    <ligand>
        <name>ATP</name>
        <dbReference type="ChEBI" id="CHEBI:30616"/>
    </ligand>
</feature>
<feature type="binding site" evidence="1">
    <location>
        <begin position="14"/>
        <end position="19"/>
    </location>
    <ligand>
        <name>substrate</name>
    </ligand>
</feature>
<feature type="site" description="Interaction with substrate tRNA" evidence="1">
    <location>
        <position position="103"/>
    </location>
</feature>
<feature type="site" description="Interaction with substrate tRNA" evidence="1">
    <location>
        <position position="124"/>
    </location>
</feature>
<gene>
    <name evidence="1" type="primary">miaA</name>
</gene>
<comment type="function">
    <text evidence="1">Catalyzes the transfer of a dimethylallyl group onto the adenine at position 37 in tRNAs that read codons beginning with uridine, leading to the formation of N6-(dimethylallyl)adenosine (i(6)A).</text>
</comment>
<comment type="catalytic activity">
    <reaction evidence="1">
        <text>adenosine(37) in tRNA + dimethylallyl diphosphate = N(6)-dimethylallyladenosine(37) in tRNA + diphosphate</text>
        <dbReference type="Rhea" id="RHEA:26482"/>
        <dbReference type="Rhea" id="RHEA-COMP:10162"/>
        <dbReference type="Rhea" id="RHEA-COMP:10375"/>
        <dbReference type="ChEBI" id="CHEBI:33019"/>
        <dbReference type="ChEBI" id="CHEBI:57623"/>
        <dbReference type="ChEBI" id="CHEBI:74411"/>
        <dbReference type="ChEBI" id="CHEBI:74415"/>
        <dbReference type="EC" id="2.5.1.75"/>
    </reaction>
</comment>
<comment type="cofactor">
    <cofactor evidence="1">
        <name>Mg(2+)</name>
        <dbReference type="ChEBI" id="CHEBI:18420"/>
    </cofactor>
</comment>
<comment type="subunit">
    <text evidence="1">Monomer.</text>
</comment>
<comment type="similarity">
    <text evidence="1">Belongs to the IPP transferase family.</text>
</comment>
<evidence type="ECO:0000255" key="1">
    <source>
        <dbReference type="HAMAP-Rule" id="MF_00185"/>
    </source>
</evidence>